<comment type="function">
    <text evidence="3 5 6 7">A tubulin-like, filament forming GTPase; the motor component of the type III plasmid partition system which ensures correct segregation of the pXO1 plasmid. Essential for plasmid replication (PubMed:16585744). The filaments seed from a DNA centromere-like site (tubC)-TubR complex which extends to surround the TubZ filaments. Highly dynamic filaments grow at the plus end and depolymerize at the minus end, a process called treadmilling. TubR-tubC complexes track the depolymerizing minus end of the filament, probably pulling plasmid within the cell (By similarity). Has a high GTPase activity; in the presence of GTP assembles into dynamic filaments which bind almost exclusively GDP. Filament formation is cooperative, requiring a critical concentration. Formation occurs very quickly and is followed by disassembly as GTP is consumed. Small amounts of GTP-gamma-S stabilize filaments (PubMed:18179418, PubMed:18198178). Has high GTP and dGTPase activity, 6-fold lower ATPase activity. Forms filaments in the presence of ATP that also disassemble. Weakly binds DNA in a GTP-dependent, non-sequence-specific manner; GTP hydrolysis is not required for DNA-binding (PubMed:18179418).</text>
</comment>
<comment type="catalytic activity">
    <reaction evidence="6 7">
        <text>GTP + H2O = GDP + phosphate + H(+)</text>
        <dbReference type="Rhea" id="RHEA:19669"/>
        <dbReference type="ChEBI" id="CHEBI:15377"/>
        <dbReference type="ChEBI" id="CHEBI:15378"/>
        <dbReference type="ChEBI" id="CHEBI:37565"/>
        <dbReference type="ChEBI" id="CHEBI:43474"/>
        <dbReference type="ChEBI" id="CHEBI:58189"/>
    </reaction>
</comment>
<comment type="activity regulation">
    <text evidence="7">GTPase inhibited by GTP-gamma-S, which also stabilizes filaments.</text>
</comment>
<comment type="subunit">
    <text evidence="3 6 7">Polymerizes to form two-stranded filaments and bundles at higher concentration in the presence of GTP (PubMed:18179418, PubMed:18198178). Binds to the TubR-tubC protein DNA complex (By similarity).</text>
</comment>
<comment type="subcellular location">
    <subcellularLocation>
        <location evidence="13">Cytoplasm</location>
    </subcellularLocation>
    <text evidence="7">Forms long, dynamic filaments.</text>
</comment>
<comment type="domain">
    <text evidence="1 2">Consists of two domains: a nucleotide-binding N-terminus that hydrolyzes GTP and a C-terminus domain necessary for polymerization. The domains are bridged by a long, central helix (By similarity). Interactions between the C-terminus and the following monomer drive polymerization (By similarity).</text>
</comment>
<comment type="disruption phenotype">
    <text evidence="5">Loss of plasmid replication.</text>
</comment>
<comment type="similarity">
    <text evidence="13">Belongs to the FtsZ family. TubZ subfamily.</text>
</comment>
<dbReference type="EC" id="3.6.5.-" evidence="6"/>
<dbReference type="EMBL" id="AF065404">
    <property type="protein sequence ID" value="AAD32349.1"/>
    <property type="molecule type" value="Genomic_DNA"/>
</dbReference>
<dbReference type="EMBL" id="AE011190">
    <property type="protein sequence ID" value="AAM26022.1"/>
    <property type="molecule type" value="Genomic_DNA"/>
</dbReference>
<dbReference type="EMBL" id="AE017336">
    <property type="protein sequence ID" value="AAT28808.2"/>
    <property type="molecule type" value="Genomic_DNA"/>
</dbReference>
<dbReference type="PIR" id="E59096">
    <property type="entry name" value="E59096"/>
</dbReference>
<dbReference type="RefSeq" id="NP_052741.1">
    <property type="nucleotide sequence ID" value="NC_001496.1"/>
</dbReference>
<dbReference type="RefSeq" id="WP_000918302.1">
    <property type="nucleotide sequence ID" value="NZ_VTZH01000011.1"/>
</dbReference>
<dbReference type="SMR" id="Q9X315"/>
<dbReference type="GeneID" id="45025445"/>
<dbReference type="KEGG" id="banh:HYU01_28325"/>
<dbReference type="KEGG" id="bar:GBAA_pXO1_0067"/>
<dbReference type="HOGENOM" id="CLU_024865_1_1_9"/>
<dbReference type="OMA" id="CECIREH"/>
<dbReference type="Proteomes" id="UP000000594">
    <property type="component" value="Plasmid pXO1"/>
</dbReference>
<dbReference type="GO" id="GO:0032153">
    <property type="term" value="C:cell division site"/>
    <property type="evidence" value="ECO:0007669"/>
    <property type="project" value="TreeGrafter"/>
</dbReference>
<dbReference type="GO" id="GO:0005737">
    <property type="term" value="C:cytoplasm"/>
    <property type="evidence" value="ECO:0007669"/>
    <property type="project" value="UniProtKB-SubCell"/>
</dbReference>
<dbReference type="GO" id="GO:0003677">
    <property type="term" value="F:DNA binding"/>
    <property type="evidence" value="ECO:0007669"/>
    <property type="project" value="UniProtKB-KW"/>
</dbReference>
<dbReference type="GO" id="GO:0005525">
    <property type="term" value="F:GTP binding"/>
    <property type="evidence" value="ECO:0007669"/>
    <property type="project" value="UniProtKB-KW"/>
</dbReference>
<dbReference type="GO" id="GO:0003924">
    <property type="term" value="F:GTPase activity"/>
    <property type="evidence" value="ECO:0007669"/>
    <property type="project" value="InterPro"/>
</dbReference>
<dbReference type="GO" id="GO:0051301">
    <property type="term" value="P:cell division"/>
    <property type="evidence" value="ECO:0007669"/>
    <property type="project" value="TreeGrafter"/>
</dbReference>
<dbReference type="GO" id="GO:0030541">
    <property type="term" value="P:plasmid partitioning"/>
    <property type="evidence" value="ECO:0007669"/>
    <property type="project" value="UniProtKB-KW"/>
</dbReference>
<dbReference type="Gene3D" id="3.40.50.1440">
    <property type="entry name" value="Tubulin/FtsZ, GTPase domain"/>
    <property type="match status" value="1"/>
</dbReference>
<dbReference type="InterPro" id="IPR045061">
    <property type="entry name" value="FtsZ/CetZ"/>
</dbReference>
<dbReference type="InterPro" id="IPR036525">
    <property type="entry name" value="Tubulin/FtsZ_GTPase_sf"/>
</dbReference>
<dbReference type="InterPro" id="IPR003008">
    <property type="entry name" value="Tubulin_FtsZ_GTPase"/>
</dbReference>
<dbReference type="InterPro" id="IPR049364">
    <property type="entry name" value="TubZ_C"/>
</dbReference>
<dbReference type="PANTHER" id="PTHR30314">
    <property type="entry name" value="CELL DIVISION PROTEIN FTSZ-RELATED"/>
    <property type="match status" value="1"/>
</dbReference>
<dbReference type="PANTHER" id="PTHR30314:SF3">
    <property type="entry name" value="MITOCHONDRIAL DIVISION PROTEIN FSZA"/>
    <property type="match status" value="1"/>
</dbReference>
<dbReference type="Pfam" id="PF00091">
    <property type="entry name" value="Tubulin"/>
    <property type="match status" value="1"/>
</dbReference>
<dbReference type="Pfam" id="PF21493">
    <property type="entry name" value="TubZ_C"/>
    <property type="match status" value="1"/>
</dbReference>
<dbReference type="SMART" id="SM00864">
    <property type="entry name" value="Tubulin"/>
    <property type="match status" value="1"/>
</dbReference>
<dbReference type="SUPFAM" id="SSF52490">
    <property type="entry name" value="Tubulin nucleotide-binding domain-like"/>
    <property type="match status" value="1"/>
</dbReference>
<name>TUBZ_BACAN</name>
<gene>
    <name evidence="11" type="primary">tubZ</name>
    <name evidence="10" type="synonym">repX</name>
    <name evidence="8" type="ordered locus">pXO1-45</name>
    <name evidence="9" type="ordered locus">BXA0067</name>
    <name evidence="12" type="ordered locus">GBAA_pXO1_0067</name>
</gene>
<evidence type="ECO:0000250" key="1">
    <source>
        <dbReference type="UniProtKB" id="B3FK34"/>
    </source>
</evidence>
<evidence type="ECO:0000250" key="2">
    <source>
        <dbReference type="UniProtKB" id="Q74P24"/>
    </source>
</evidence>
<evidence type="ECO:0000250" key="3">
    <source>
        <dbReference type="UniProtKB" id="Q8KNP3"/>
    </source>
</evidence>
<evidence type="ECO:0000256" key="4">
    <source>
        <dbReference type="SAM" id="MobiDB-lite"/>
    </source>
</evidence>
<evidence type="ECO:0000269" key="5">
    <source>
    </source>
</evidence>
<evidence type="ECO:0000269" key="6">
    <source>
    </source>
</evidence>
<evidence type="ECO:0000269" key="7">
    <source>
    </source>
</evidence>
<evidence type="ECO:0000303" key="8">
    <source>
    </source>
</evidence>
<evidence type="ECO:0000303" key="9">
    <source>
    </source>
</evidence>
<evidence type="ECO:0000303" key="10">
    <source>
    </source>
</evidence>
<evidence type="ECO:0000303" key="11">
    <source>
    </source>
</evidence>
<evidence type="ECO:0000303" key="12">
    <source>
    </source>
</evidence>
<evidence type="ECO:0000305" key="13"/>
<keyword id="KW-0963">Cytoplasm</keyword>
<keyword id="KW-0238">DNA-binding</keyword>
<keyword id="KW-0342">GTP-binding</keyword>
<keyword id="KW-0378">Hydrolase</keyword>
<keyword id="KW-0547">Nucleotide-binding</keyword>
<keyword id="KW-0614">Plasmid</keyword>
<keyword id="KW-0616">Plasmid partition</keyword>
<keyword id="KW-1185">Reference proteome</keyword>
<feature type="chain" id="PRO_0000233625" description="Tubulin-like protein TubZ">
    <location>
        <begin position="1"/>
        <end position="435"/>
    </location>
</feature>
<feature type="region of interest" description="Disordered" evidence="4">
    <location>
        <begin position="403"/>
        <end position="435"/>
    </location>
</feature>
<feature type="binding site" evidence="3">
    <location>
        <begin position="25"/>
        <end position="26"/>
    </location>
    <ligand>
        <name>GTP</name>
        <dbReference type="ChEBI" id="CHEBI:37565"/>
    </ligand>
</feature>
<feature type="binding site" evidence="3">
    <location>
        <begin position="124"/>
        <end position="126"/>
    </location>
    <ligand>
        <name>GTP</name>
        <dbReference type="ChEBI" id="CHEBI:37565"/>
    </ligand>
</feature>
<feature type="binding site" evidence="3">
    <location>
        <position position="185"/>
    </location>
    <ligand>
        <name>GTP</name>
        <dbReference type="ChEBI" id="CHEBI:37565"/>
    </ligand>
</feature>
<feature type="binding site" evidence="3">
    <location>
        <position position="209"/>
    </location>
    <ligand>
        <name>GTP</name>
        <dbReference type="ChEBI" id="CHEBI:37565"/>
    </ligand>
</feature>
<feature type="mutagenesis site" description="Abolishes plasmid replication. Retains about 6% GTPase activity, forms very few filaments." evidence="5 6">
    <original>T</original>
    <variation>A</variation>
    <location>
        <position position="125"/>
    </location>
</feature>
<proteinExistence type="evidence at protein level"/>
<geneLocation type="plasmid">
    <name>pXO1</name>
</geneLocation>
<sequence>MAGNFSEIESQGNISLKFGFLGLGMGGCAIAAECANKETQIKNNKYPYRAILVNTNSQDFNKIEIKNAGNVRKIQLEGYEQGAARNPQVGEEAFVKHETKIFETVKQEFEDRDFIWITCGLGGGTGTGALLKAIEMLYEHDYNFGLLLTLPRDAEALKVLENATSRIRSIAMNQEAFGSIVLIDNAKLYRKFEEENPSALANEYTSYSNKYIADALHEINLVTSSFTPFSDTHFDASEFAQVINTPGVLSLAKLELKSNQLDTENPLGYLTQLGNALEKGVLYDTEREELESAKKSALSIVTSPLRASRLYNFSFLNQMENFLKDRTPYVDERPIAPYVNKHTAKKEEDIVKFYSVVAGLPLPKRVSDIIDEITRIKEEREQANSKKSNAVLNKLFAFDDSVQEEKPKKKKLNFGAEPEAEVADDSQPTKKKLSF</sequence>
<organism>
    <name type="scientific">Bacillus anthracis</name>
    <dbReference type="NCBI Taxonomy" id="1392"/>
    <lineage>
        <taxon>Bacteria</taxon>
        <taxon>Bacillati</taxon>
        <taxon>Bacillota</taxon>
        <taxon>Bacilli</taxon>
        <taxon>Bacillales</taxon>
        <taxon>Bacillaceae</taxon>
        <taxon>Bacillus</taxon>
        <taxon>Bacillus cereus group</taxon>
    </lineage>
</organism>
<reference key="1">
    <citation type="journal article" date="1999" name="J. Bacteriol.">
        <title>Sequence and organization of pXO1, the large Bacillus anthracis plasmid harboring the anthrax toxin genes.</title>
        <authorList>
            <person name="Okinaka R.T."/>
            <person name="Cloud K."/>
            <person name="Hampton O."/>
            <person name="Hoffmaster A.R."/>
            <person name="Hill K.K."/>
            <person name="Keim P."/>
            <person name="Koehler T.M."/>
            <person name="Lamke G."/>
            <person name="Kumano S."/>
            <person name="Mahillon J."/>
            <person name="Manter D."/>
            <person name="Martinez Y."/>
            <person name="Ricke D."/>
            <person name="Svensson R."/>
            <person name="Jackson P.J."/>
        </authorList>
    </citation>
    <scope>NUCLEOTIDE SEQUENCE [LARGE SCALE GENOMIC DNA]</scope>
    <source>
        <strain>Sterne</strain>
        <plasmid>pXO1</plasmid>
    </source>
</reference>
<reference key="2">
    <citation type="journal article" date="2002" name="Science">
        <title>Comparative genome sequencing for discovery of novel polymorphisms in Bacillus anthracis.</title>
        <authorList>
            <person name="Read T.D."/>
            <person name="Salzberg S.L."/>
            <person name="Pop M."/>
            <person name="Shumway M.F."/>
            <person name="Umayam L."/>
            <person name="Jiang L."/>
            <person name="Holtzapple E."/>
            <person name="Busch J.D."/>
            <person name="Smith K.L."/>
            <person name="Schupp J.M."/>
            <person name="Solomon D."/>
            <person name="Keim P."/>
            <person name="Fraser C.M."/>
        </authorList>
    </citation>
    <scope>NUCLEOTIDE SEQUENCE [GENOMIC DNA]</scope>
    <source>
        <strain>Ames / isolate Florida / A2012</strain>
        <plasmid>pXO1</plasmid>
    </source>
</reference>
<reference key="3">
    <citation type="journal article" date="2009" name="J. Bacteriol.">
        <title>The complete genome sequence of Bacillus anthracis Ames 'Ancestor'.</title>
        <authorList>
            <person name="Ravel J."/>
            <person name="Jiang L."/>
            <person name="Stanley S.T."/>
            <person name="Wilson M.R."/>
            <person name="Decker R.S."/>
            <person name="Read T.D."/>
            <person name="Worsham P."/>
            <person name="Keim P.S."/>
            <person name="Salzberg S.L."/>
            <person name="Fraser-Liggett C.M."/>
            <person name="Rasko D.A."/>
        </authorList>
    </citation>
    <scope>NUCLEOTIDE SEQUENCE [LARGE SCALE GENOMIC DNA]</scope>
    <source>
        <strain>Ames ancestor</strain>
        <plasmid>pXO1</plasmid>
    </source>
</reference>
<reference key="4">
    <citation type="journal article" date="2006" name="J. Bacteriol.">
        <title>A novel FtsZ-like protein is involved in replication of the anthrax toxin-encoding pXO1 plasmid in Bacillus anthracis.</title>
        <authorList>
            <person name="Tinsley E."/>
            <person name="Khan S.A."/>
        </authorList>
    </citation>
    <scope>FUNCTION</scope>
    <scope>DISRUPTION PHENOTYPE</scope>
    <scope>MUTAGENESIS OF THR-125</scope>
    <source>
        <strain>Sterne</strain>
        <plasmid>pXO1</plasmid>
    </source>
</reference>
<reference key="5">
    <citation type="journal article" date="2008" name="J. Biol. Chem.">
        <title>In vitro assembly studies of FtsZ/tubulin-like proteins (TubZ) from Bacillus plasmids: evidence for a capping mechanism.</title>
        <authorList>
            <person name="Chen Y."/>
            <person name="Erickson H.P."/>
        </authorList>
    </citation>
    <scope>FUNCTION</scope>
    <scope>CATALYTIC ACTIVITY</scope>
    <scope>ACTIVITY REGULATION</scope>
    <scope>FILAMENT FORMATION</scope>
    <scope>SUBUNIT</scope>
    <source>
        <strain>7702</strain>
        <plasmid>pXO1</plasmid>
    </source>
</reference>
<reference key="6">
    <citation type="journal article" date="2008" name="Mol. Microbiol.">
        <title>GTP-dependent polymerization of the tubulin-like RepX replication protein encoded by the pXO1 plasmid of Bacillus anthracis.</title>
        <authorList>
            <person name="Anand S.P."/>
            <person name="Akhtar P."/>
            <person name="Tinsley E."/>
            <person name="Watkins S.C."/>
            <person name="Khan S.A."/>
        </authorList>
    </citation>
    <scope>FUNCTION</scope>
    <scope>CATALYTIC ACTIVITY</scope>
    <scope>FILAMENT FORMATION</scope>
    <scope>SUBUNIT</scope>
    <scope>MUTAGENESIS OF THR-125</scope>
    <scope>POTENTIAL DNA-BINDING</scope>
    <source>
        <plasmid>pXO1</plasmid>
    </source>
</reference>
<accession>Q9X315</accession>
<accession>Q7CMH8</accession>
<protein>
    <recommendedName>
        <fullName evidence="13">Tubulin-like protein TubZ</fullName>
        <ecNumber evidence="6">3.6.5.-</ecNumber>
    </recommendedName>
    <alternativeName>
        <fullName evidence="10">FtsZ-like protein TubZ-Ba</fullName>
    </alternativeName>
    <alternativeName>
        <fullName evidence="11">FtsZ/tubulin-like protein TubZ</fullName>
    </alternativeName>
    <alternativeName>
        <fullName evidence="12">Plasmid replication protein RepX</fullName>
    </alternativeName>
</protein>